<name>RHAT_YERPN</name>
<comment type="function">
    <text evidence="1">Uptake of L-rhamnose across the cytoplasmic membrane with the concomitant transport of protons into the cell (symport system).</text>
</comment>
<comment type="catalytic activity">
    <reaction evidence="1">
        <text>L-rhamnopyranose(in) + H(+)(in) = L-rhamnopyranose(out) + H(+)(out)</text>
        <dbReference type="Rhea" id="RHEA:29947"/>
        <dbReference type="ChEBI" id="CHEBI:15378"/>
        <dbReference type="ChEBI" id="CHEBI:62346"/>
    </reaction>
    <physiologicalReaction direction="right-to-left" evidence="1">
        <dbReference type="Rhea" id="RHEA:29949"/>
    </physiologicalReaction>
</comment>
<comment type="subcellular location">
    <subcellularLocation>
        <location evidence="1">Cell inner membrane</location>
        <topology evidence="1">Multi-pass membrane protein</topology>
    </subcellularLocation>
</comment>
<comment type="similarity">
    <text evidence="1">Belongs to the L-rhamnose transporter (TC 2.A.7.6) family.</text>
</comment>
<accession>Q1CEB8</accession>
<accession>C4GY52</accession>
<evidence type="ECO:0000255" key="1">
    <source>
        <dbReference type="HAMAP-Rule" id="MF_01532"/>
    </source>
</evidence>
<feature type="chain" id="PRO_0000292770" description="L-rhamnose-proton symporter">
    <location>
        <begin position="1"/>
        <end position="344"/>
    </location>
</feature>
<feature type="transmembrane region" description="Helical" evidence="1">
    <location>
        <begin position="4"/>
        <end position="24"/>
    </location>
</feature>
<feature type="transmembrane region" description="Helical" evidence="1">
    <location>
        <begin position="38"/>
        <end position="58"/>
    </location>
</feature>
<feature type="transmembrane region" description="Helical" evidence="1">
    <location>
        <begin position="68"/>
        <end position="88"/>
    </location>
</feature>
<feature type="transmembrane region" description="Helical" evidence="1">
    <location>
        <begin position="101"/>
        <end position="121"/>
    </location>
</feature>
<feature type="transmembrane region" description="Helical" evidence="1">
    <location>
        <begin position="137"/>
        <end position="157"/>
    </location>
</feature>
<feature type="transmembrane region" description="Helical" evidence="1">
    <location>
        <begin position="175"/>
        <end position="195"/>
    </location>
</feature>
<feature type="transmembrane region" description="Helical" evidence="1">
    <location>
        <begin position="207"/>
        <end position="227"/>
    </location>
</feature>
<feature type="transmembrane region" description="Helical" evidence="1">
    <location>
        <begin position="259"/>
        <end position="279"/>
    </location>
</feature>
<feature type="transmembrane region" description="Helical" evidence="1">
    <location>
        <begin position="290"/>
        <end position="310"/>
    </location>
</feature>
<feature type="transmembrane region" description="Helical" evidence="1">
    <location>
        <begin position="321"/>
        <end position="341"/>
    </location>
</feature>
<reference key="1">
    <citation type="journal article" date="2006" name="J. Bacteriol.">
        <title>Complete genome sequence of Yersinia pestis strains Antiqua and Nepal516: evidence of gene reduction in an emerging pathogen.</title>
        <authorList>
            <person name="Chain P.S.G."/>
            <person name="Hu P."/>
            <person name="Malfatti S.A."/>
            <person name="Radnedge L."/>
            <person name="Larimer F."/>
            <person name="Vergez L.M."/>
            <person name="Worsham P."/>
            <person name="Chu M.C."/>
            <person name="Andersen G.L."/>
        </authorList>
    </citation>
    <scope>NUCLEOTIDE SEQUENCE [LARGE SCALE GENOMIC DNA]</scope>
    <source>
        <strain>Nepal516</strain>
    </source>
</reference>
<reference key="2">
    <citation type="submission" date="2009-04" db="EMBL/GenBank/DDBJ databases">
        <title>Yersinia pestis Nepal516A whole genome shotgun sequencing project.</title>
        <authorList>
            <person name="Plunkett G. III"/>
            <person name="Anderson B.D."/>
            <person name="Baumler D.J."/>
            <person name="Burland V."/>
            <person name="Cabot E.L."/>
            <person name="Glasner J.D."/>
            <person name="Mau B."/>
            <person name="Neeno-Eckwall E."/>
            <person name="Perna N.T."/>
            <person name="Munk A.C."/>
            <person name="Tapia R."/>
            <person name="Green L.D."/>
            <person name="Rogers Y.C."/>
            <person name="Detter J.C."/>
            <person name="Bruce D.C."/>
            <person name="Brettin T.S."/>
        </authorList>
    </citation>
    <scope>NUCLEOTIDE SEQUENCE [LARGE SCALE GENOMIC DNA]</scope>
    <source>
        <strain>Nepal516</strain>
    </source>
</reference>
<gene>
    <name evidence="1" type="primary">rhaT</name>
    <name type="ordered locus">YPN_3335</name>
    <name type="ORF">YP516_3791</name>
</gene>
<sequence>MNNAIILGIIWHLVGAASAACFYAPFKQVKKWSWETMWSIGGLVSWLILPWTVSYLLLPDFWQYYGSFSIATLLPVFLFGAMWGIGNINYGLTMRYLGMSMGIGIAIGITLIIGTLMTPILQGRFDVLLGTPGGRMTLLGVFVALIGVAIVSYAGLLKERAMGIQAEEFNLKKGLILAVMCGIFSAGMSFAMDAAKPMHEAASALGINSLYVALPSYVIIMGGGAIINLSYCFIRLATLKNLSVKADFSVAKPLLITNILFSALAGLMWYLQFFFYAWGHAKIPQQYDYMSWMLHMSFYVLCGGIVGLLLKEWKCSTKKPVAVLCIGCLVIILAANIVGLGMAA</sequence>
<protein>
    <recommendedName>
        <fullName evidence="1">L-rhamnose-proton symporter</fullName>
    </recommendedName>
    <alternativeName>
        <fullName evidence="1">L-rhamnose-H(+) transport protein</fullName>
    </alternativeName>
</protein>
<organism>
    <name type="scientific">Yersinia pestis bv. Antiqua (strain Nepal516)</name>
    <dbReference type="NCBI Taxonomy" id="377628"/>
    <lineage>
        <taxon>Bacteria</taxon>
        <taxon>Pseudomonadati</taxon>
        <taxon>Pseudomonadota</taxon>
        <taxon>Gammaproteobacteria</taxon>
        <taxon>Enterobacterales</taxon>
        <taxon>Yersiniaceae</taxon>
        <taxon>Yersinia</taxon>
    </lineage>
</organism>
<proteinExistence type="inferred from homology"/>
<keyword id="KW-0997">Cell inner membrane</keyword>
<keyword id="KW-1003">Cell membrane</keyword>
<keyword id="KW-0472">Membrane</keyword>
<keyword id="KW-0762">Sugar transport</keyword>
<keyword id="KW-0769">Symport</keyword>
<keyword id="KW-0812">Transmembrane</keyword>
<keyword id="KW-1133">Transmembrane helix</keyword>
<keyword id="KW-0813">Transport</keyword>
<dbReference type="EMBL" id="CP000305">
    <property type="protein sequence ID" value="ABG19662.1"/>
    <property type="molecule type" value="Genomic_DNA"/>
</dbReference>
<dbReference type="EMBL" id="ACNQ01000017">
    <property type="protein sequence ID" value="EEO75852.1"/>
    <property type="molecule type" value="Genomic_DNA"/>
</dbReference>
<dbReference type="RefSeq" id="WP_002209111.1">
    <property type="nucleotide sequence ID" value="NZ_ACNQ01000017.1"/>
</dbReference>
<dbReference type="GeneID" id="57974271"/>
<dbReference type="KEGG" id="ypn:YPN_3335"/>
<dbReference type="HOGENOM" id="CLU_066437_0_0_6"/>
<dbReference type="Proteomes" id="UP000008936">
    <property type="component" value="Chromosome"/>
</dbReference>
<dbReference type="GO" id="GO:0005886">
    <property type="term" value="C:plasma membrane"/>
    <property type="evidence" value="ECO:0007669"/>
    <property type="project" value="UniProtKB-SubCell"/>
</dbReference>
<dbReference type="GO" id="GO:0015153">
    <property type="term" value="F:rhamnose transmembrane transporter activity"/>
    <property type="evidence" value="ECO:0007669"/>
    <property type="project" value="UniProtKB-UniRule"/>
</dbReference>
<dbReference type="GO" id="GO:0015293">
    <property type="term" value="F:symporter activity"/>
    <property type="evidence" value="ECO:0007669"/>
    <property type="project" value="UniProtKB-KW"/>
</dbReference>
<dbReference type="HAMAP" id="MF_01532">
    <property type="entry name" value="RhaT"/>
    <property type="match status" value="1"/>
</dbReference>
<dbReference type="InterPro" id="IPR004673">
    <property type="entry name" value="L-rhamnose-proton_sym_RhaT"/>
</dbReference>
<dbReference type="NCBIfam" id="NF010021">
    <property type="entry name" value="PRK13499.1-1"/>
    <property type="match status" value="1"/>
</dbReference>
<dbReference type="NCBIfam" id="NF010023">
    <property type="entry name" value="PRK13499.1-3"/>
    <property type="match status" value="1"/>
</dbReference>
<dbReference type="NCBIfam" id="TIGR00776">
    <property type="entry name" value="RhaT"/>
    <property type="match status" value="1"/>
</dbReference>
<dbReference type="Pfam" id="PF06379">
    <property type="entry name" value="RhaT"/>
    <property type="match status" value="1"/>
</dbReference>